<organismHost>
    <name type="scientific">Acheta domesticus</name>
    <name type="common">House cricket</name>
    <dbReference type="NCBI Taxonomy" id="6997"/>
</organismHost>
<organismHost>
    <name type="scientific">Chilo suppressalis</name>
    <name type="common">Asiatic rice borer moth</name>
    <dbReference type="NCBI Taxonomy" id="168631"/>
</organismHost>
<organismHost>
    <name type="scientific">Gryllus bimaculatus</name>
    <name type="common">Two-spotted cricket</name>
    <dbReference type="NCBI Taxonomy" id="6999"/>
</organismHost>
<organismHost>
    <name type="scientific">Gryllus campestris</name>
    <dbReference type="NCBI Taxonomy" id="58607"/>
</organismHost>
<organismHost>
    <name type="scientific">Spodoptera frugiperda</name>
    <name type="common">Fall armyworm</name>
    <dbReference type="NCBI Taxonomy" id="7108"/>
</organismHost>
<keyword id="KW-1185">Reference proteome</keyword>
<keyword id="KW-0732">Signal</keyword>
<organism>
    <name type="scientific">Invertebrate iridescent virus 6</name>
    <name type="common">IIV-6</name>
    <name type="synonym">Chilo iridescent virus</name>
    <dbReference type="NCBI Taxonomy" id="176652"/>
    <lineage>
        <taxon>Viruses</taxon>
        <taxon>Varidnaviria</taxon>
        <taxon>Bamfordvirae</taxon>
        <taxon>Nucleocytoviricota</taxon>
        <taxon>Megaviricetes</taxon>
        <taxon>Pimascovirales</taxon>
        <taxon>Iridoviridae</taxon>
        <taxon>Betairidovirinae</taxon>
        <taxon>Iridovirus</taxon>
    </lineage>
</organism>
<protein>
    <recommendedName>
        <fullName>Uncharacterized protein 120L</fullName>
    </recommendedName>
</protein>
<evidence type="ECO:0000255" key="1"/>
<sequence>MFKFILLCFCINFAFSSPVIQFFIEDEIKLEQPQPIIITSKNKNLPQILFKNTYDNNNIENVGGSCYCTNYMGAIDQGITQMCCSSSGGKMSGNICISNWSSSGFGNCCKATGAYYGGCF</sequence>
<proteinExistence type="inferred from homology"/>
<reference key="1">
    <citation type="journal article" date="2001" name="Virology">
        <title>Analysis of the first complete DNA sequence of an invertebrate iridovirus: coding strategy of the genome of Chilo iridescent virus.</title>
        <authorList>
            <person name="Jakob N.J."/>
            <person name="Mueller K."/>
            <person name="Bahr U."/>
            <person name="Darai G."/>
        </authorList>
    </citation>
    <scope>NUCLEOTIDE SEQUENCE [LARGE SCALE GENOMIC DNA]</scope>
</reference>
<reference key="2">
    <citation type="journal article" date="2007" name="Virol. J.">
        <title>Comparative genomic analysis of the family Iridoviridae: re-annotating and defining the core set of iridovirus genes.</title>
        <authorList>
            <person name="Eaton H.E."/>
            <person name="Metcalf J."/>
            <person name="Penny E."/>
            <person name="Tcherepanov V."/>
            <person name="Upton C."/>
            <person name="Brunetti C.R."/>
        </authorList>
    </citation>
    <scope>GENOME REANNOTATION</scope>
</reference>
<name>120L_IIV6</name>
<gene>
    <name type="ORF">IIV6-120L</name>
</gene>
<dbReference type="EMBL" id="AF303741">
    <property type="protein sequence ID" value="AAB94445.1"/>
    <property type="molecule type" value="Genomic_DNA"/>
</dbReference>
<dbReference type="PIR" id="T03071">
    <property type="entry name" value="T03071"/>
</dbReference>
<dbReference type="RefSeq" id="NP_149583.1">
    <property type="nucleotide sequence ID" value="NC_003038.1"/>
</dbReference>
<dbReference type="KEGG" id="vg:1733206"/>
<dbReference type="Proteomes" id="UP000001359">
    <property type="component" value="Genome"/>
</dbReference>
<feature type="signal peptide" evidence="1">
    <location>
        <begin position="1"/>
        <end position="16"/>
    </location>
</feature>
<feature type="chain" id="PRO_0000377998" description="Uncharacterized protein 120L">
    <location>
        <begin position="17"/>
        <end position="120"/>
    </location>
</feature>
<accession>O55734</accession>